<evidence type="ECO:0000255" key="1">
    <source>
        <dbReference type="HAMAP-Rule" id="MF_00220"/>
    </source>
</evidence>
<protein>
    <recommendedName>
        <fullName evidence="1">Dihydroorotase</fullName>
        <shortName evidence="1">DHOase</shortName>
        <ecNumber evidence="1">3.5.2.3</ecNumber>
    </recommendedName>
</protein>
<name>PYRC_LISMO</name>
<proteinExistence type="inferred from homology"/>
<gene>
    <name evidence="1" type="primary">pyrC</name>
    <name type="ordered locus">lmo1837</name>
</gene>
<accession>Q8Y663</accession>
<dbReference type="EC" id="3.5.2.3" evidence="1"/>
<dbReference type="EMBL" id="AL591981">
    <property type="protein sequence ID" value="CAC99915.1"/>
    <property type="molecule type" value="Genomic_DNA"/>
</dbReference>
<dbReference type="PIR" id="AE1304">
    <property type="entry name" value="AE1304"/>
</dbReference>
<dbReference type="RefSeq" id="NP_465362.1">
    <property type="nucleotide sequence ID" value="NC_003210.1"/>
</dbReference>
<dbReference type="RefSeq" id="WP_003723081.1">
    <property type="nucleotide sequence ID" value="NZ_CP149495.1"/>
</dbReference>
<dbReference type="SMR" id="Q8Y663"/>
<dbReference type="STRING" id="169963.gene:17594522"/>
<dbReference type="PaxDb" id="169963-lmo1837"/>
<dbReference type="EnsemblBacteria" id="CAC99915">
    <property type="protein sequence ID" value="CAC99915"/>
    <property type="gene ID" value="CAC99915"/>
</dbReference>
<dbReference type="GeneID" id="985870"/>
<dbReference type="KEGG" id="lmo:lmo1837"/>
<dbReference type="PATRIC" id="fig|169963.11.peg.1882"/>
<dbReference type="eggNOG" id="COG0044">
    <property type="taxonomic scope" value="Bacteria"/>
</dbReference>
<dbReference type="HOGENOM" id="CLU_015572_1_0_9"/>
<dbReference type="OrthoDB" id="9765462at2"/>
<dbReference type="PhylomeDB" id="Q8Y663"/>
<dbReference type="BioCyc" id="LMON169963:LMO1837-MONOMER"/>
<dbReference type="UniPathway" id="UPA00070">
    <property type="reaction ID" value="UER00117"/>
</dbReference>
<dbReference type="Proteomes" id="UP000000817">
    <property type="component" value="Chromosome"/>
</dbReference>
<dbReference type="GO" id="GO:0005737">
    <property type="term" value="C:cytoplasm"/>
    <property type="evidence" value="ECO:0000318"/>
    <property type="project" value="GO_Central"/>
</dbReference>
<dbReference type="GO" id="GO:0004038">
    <property type="term" value="F:allantoinase activity"/>
    <property type="evidence" value="ECO:0000318"/>
    <property type="project" value="GO_Central"/>
</dbReference>
<dbReference type="GO" id="GO:0004151">
    <property type="term" value="F:dihydroorotase activity"/>
    <property type="evidence" value="ECO:0007669"/>
    <property type="project" value="UniProtKB-UniRule"/>
</dbReference>
<dbReference type="GO" id="GO:0008270">
    <property type="term" value="F:zinc ion binding"/>
    <property type="evidence" value="ECO:0007669"/>
    <property type="project" value="UniProtKB-UniRule"/>
</dbReference>
<dbReference type="GO" id="GO:0044205">
    <property type="term" value="P:'de novo' UMP biosynthetic process"/>
    <property type="evidence" value="ECO:0007669"/>
    <property type="project" value="UniProtKB-UniRule"/>
</dbReference>
<dbReference type="GO" id="GO:0006145">
    <property type="term" value="P:purine nucleobase catabolic process"/>
    <property type="evidence" value="ECO:0000318"/>
    <property type="project" value="GO_Central"/>
</dbReference>
<dbReference type="CDD" id="cd01317">
    <property type="entry name" value="DHOase_IIa"/>
    <property type="match status" value="1"/>
</dbReference>
<dbReference type="Gene3D" id="3.20.20.140">
    <property type="entry name" value="Metal-dependent hydrolases"/>
    <property type="match status" value="1"/>
</dbReference>
<dbReference type="Gene3D" id="2.30.40.10">
    <property type="entry name" value="Urease, subunit C, domain 1"/>
    <property type="match status" value="1"/>
</dbReference>
<dbReference type="HAMAP" id="MF_00220_B">
    <property type="entry name" value="PyrC_classI_B"/>
    <property type="match status" value="1"/>
</dbReference>
<dbReference type="InterPro" id="IPR006680">
    <property type="entry name" value="Amidohydro-rel"/>
</dbReference>
<dbReference type="InterPro" id="IPR004722">
    <property type="entry name" value="DHOase"/>
</dbReference>
<dbReference type="InterPro" id="IPR050138">
    <property type="entry name" value="DHOase/Allantoinase_Hydrolase"/>
</dbReference>
<dbReference type="InterPro" id="IPR002195">
    <property type="entry name" value="Dihydroorotase_CS"/>
</dbReference>
<dbReference type="InterPro" id="IPR011059">
    <property type="entry name" value="Metal-dep_hydrolase_composite"/>
</dbReference>
<dbReference type="InterPro" id="IPR032466">
    <property type="entry name" value="Metal_Hydrolase"/>
</dbReference>
<dbReference type="NCBIfam" id="NF006837">
    <property type="entry name" value="PRK09357.1-2"/>
    <property type="match status" value="1"/>
</dbReference>
<dbReference type="NCBIfam" id="TIGR00857">
    <property type="entry name" value="pyrC_multi"/>
    <property type="match status" value="1"/>
</dbReference>
<dbReference type="PANTHER" id="PTHR43668">
    <property type="entry name" value="ALLANTOINASE"/>
    <property type="match status" value="1"/>
</dbReference>
<dbReference type="PANTHER" id="PTHR43668:SF2">
    <property type="entry name" value="ALLANTOINASE"/>
    <property type="match status" value="1"/>
</dbReference>
<dbReference type="Pfam" id="PF01979">
    <property type="entry name" value="Amidohydro_1"/>
    <property type="match status" value="1"/>
</dbReference>
<dbReference type="SUPFAM" id="SSF51338">
    <property type="entry name" value="Composite domain of metallo-dependent hydrolases"/>
    <property type="match status" value="1"/>
</dbReference>
<dbReference type="SUPFAM" id="SSF51556">
    <property type="entry name" value="Metallo-dependent hydrolases"/>
    <property type="match status" value="1"/>
</dbReference>
<dbReference type="PROSITE" id="PS00482">
    <property type="entry name" value="DIHYDROOROTASE_1"/>
    <property type="match status" value="1"/>
</dbReference>
<dbReference type="PROSITE" id="PS00483">
    <property type="entry name" value="DIHYDROOROTASE_2"/>
    <property type="match status" value="1"/>
</dbReference>
<keyword id="KW-0378">Hydrolase</keyword>
<keyword id="KW-0479">Metal-binding</keyword>
<keyword id="KW-0665">Pyrimidine biosynthesis</keyword>
<keyword id="KW-1185">Reference proteome</keyword>
<keyword id="KW-0862">Zinc</keyword>
<comment type="function">
    <text evidence="1">Catalyzes the reversible cyclization of carbamoyl aspartate to dihydroorotate.</text>
</comment>
<comment type="catalytic activity">
    <reaction evidence="1">
        <text>(S)-dihydroorotate + H2O = N-carbamoyl-L-aspartate + H(+)</text>
        <dbReference type="Rhea" id="RHEA:24296"/>
        <dbReference type="ChEBI" id="CHEBI:15377"/>
        <dbReference type="ChEBI" id="CHEBI:15378"/>
        <dbReference type="ChEBI" id="CHEBI:30864"/>
        <dbReference type="ChEBI" id="CHEBI:32814"/>
        <dbReference type="EC" id="3.5.2.3"/>
    </reaction>
</comment>
<comment type="cofactor">
    <cofactor evidence="1">
        <name>Zn(2+)</name>
        <dbReference type="ChEBI" id="CHEBI:29105"/>
    </cofactor>
    <text evidence="1">Binds 2 Zn(2+) ions per subunit.</text>
</comment>
<comment type="pathway">
    <text evidence="1">Pyrimidine metabolism; UMP biosynthesis via de novo pathway; (S)-dihydroorotate from bicarbonate: step 3/3.</text>
</comment>
<comment type="similarity">
    <text evidence="1">Belongs to the metallo-dependent hydrolases superfamily. DHOase family. Class I DHOase subfamily.</text>
</comment>
<sequence length="426" mass="46160">MYVLKNGQVLNASGKLESKDVLIQNGKVNLIADSIEVTSGEEFDATGKLITPGFIDVHVHLREPGGEHKETILTGTKAAARGGYTTICSMPNTKPVPDSKEVMESIQAKIKETAKVRVLPYASITTSLGTDELVDFEALKEAGAFAFTDDGVGVQLAGTMYEAMKRAAALDMAIVAHCEDNSLIYGGVVHDGIFAEKEGLKGIPNIAESVQIARDVLLAEAAGCHYHVCHISTKESVRVVRDAKRAGIRVTAEVSPHHLILDEEAIPGNDGNWKMNPPLRSKEDRAALLEGLLDGTIDFIATDHAPHAAEEKNVPMEQAAFGIVGLETAFPLLYTHFVKTNEWTLKQLIDWMTVKPAECFKLPYGKLEEGSVADIVVLDLEKEANIDPDTFYSKGKNTPFVGETCIGWPVATFAEGTLVYNEGEIK</sequence>
<reference key="1">
    <citation type="journal article" date="2001" name="Science">
        <title>Comparative genomics of Listeria species.</title>
        <authorList>
            <person name="Glaser P."/>
            <person name="Frangeul L."/>
            <person name="Buchrieser C."/>
            <person name="Rusniok C."/>
            <person name="Amend A."/>
            <person name="Baquero F."/>
            <person name="Berche P."/>
            <person name="Bloecker H."/>
            <person name="Brandt P."/>
            <person name="Chakraborty T."/>
            <person name="Charbit A."/>
            <person name="Chetouani F."/>
            <person name="Couve E."/>
            <person name="de Daruvar A."/>
            <person name="Dehoux P."/>
            <person name="Domann E."/>
            <person name="Dominguez-Bernal G."/>
            <person name="Duchaud E."/>
            <person name="Durant L."/>
            <person name="Dussurget O."/>
            <person name="Entian K.-D."/>
            <person name="Fsihi H."/>
            <person name="Garcia-del Portillo F."/>
            <person name="Garrido P."/>
            <person name="Gautier L."/>
            <person name="Goebel W."/>
            <person name="Gomez-Lopez N."/>
            <person name="Hain T."/>
            <person name="Hauf J."/>
            <person name="Jackson D."/>
            <person name="Jones L.-M."/>
            <person name="Kaerst U."/>
            <person name="Kreft J."/>
            <person name="Kuhn M."/>
            <person name="Kunst F."/>
            <person name="Kurapkat G."/>
            <person name="Madueno E."/>
            <person name="Maitournam A."/>
            <person name="Mata Vicente J."/>
            <person name="Ng E."/>
            <person name="Nedjari H."/>
            <person name="Nordsiek G."/>
            <person name="Novella S."/>
            <person name="de Pablos B."/>
            <person name="Perez-Diaz J.-C."/>
            <person name="Purcell R."/>
            <person name="Remmel B."/>
            <person name="Rose M."/>
            <person name="Schlueter T."/>
            <person name="Simoes N."/>
            <person name="Tierrez A."/>
            <person name="Vazquez-Boland J.-A."/>
            <person name="Voss H."/>
            <person name="Wehland J."/>
            <person name="Cossart P."/>
        </authorList>
    </citation>
    <scope>NUCLEOTIDE SEQUENCE [LARGE SCALE GENOMIC DNA]</scope>
    <source>
        <strain>ATCC BAA-679 / EGD-e</strain>
    </source>
</reference>
<feature type="chain" id="PRO_0000147241" description="Dihydroorotase">
    <location>
        <begin position="1"/>
        <end position="426"/>
    </location>
</feature>
<feature type="active site" evidence="1">
    <location>
        <position position="303"/>
    </location>
</feature>
<feature type="binding site" evidence="1">
    <location>
        <position position="58"/>
    </location>
    <ligand>
        <name>Zn(2+)</name>
        <dbReference type="ChEBI" id="CHEBI:29105"/>
        <label>1</label>
    </ligand>
</feature>
<feature type="binding site" evidence="1">
    <location>
        <begin position="60"/>
        <end position="62"/>
    </location>
    <ligand>
        <name>substrate</name>
    </ligand>
</feature>
<feature type="binding site" evidence="1">
    <location>
        <position position="60"/>
    </location>
    <ligand>
        <name>Zn(2+)</name>
        <dbReference type="ChEBI" id="CHEBI:29105"/>
        <label>1</label>
    </ligand>
</feature>
<feature type="binding site" evidence="1">
    <location>
        <position position="92"/>
    </location>
    <ligand>
        <name>substrate</name>
    </ligand>
</feature>
<feature type="binding site" evidence="1">
    <location>
        <position position="150"/>
    </location>
    <ligand>
        <name>Zn(2+)</name>
        <dbReference type="ChEBI" id="CHEBI:29105"/>
        <label>1</label>
    </ligand>
</feature>
<feature type="binding site" evidence="1">
    <location>
        <position position="150"/>
    </location>
    <ligand>
        <name>Zn(2+)</name>
        <dbReference type="ChEBI" id="CHEBI:29105"/>
        <label>2</label>
    </ligand>
</feature>
<feature type="binding site" evidence="1">
    <location>
        <position position="177"/>
    </location>
    <ligand>
        <name>Zn(2+)</name>
        <dbReference type="ChEBI" id="CHEBI:29105"/>
        <label>2</label>
    </ligand>
</feature>
<feature type="binding site" evidence="1">
    <location>
        <position position="230"/>
    </location>
    <ligand>
        <name>Zn(2+)</name>
        <dbReference type="ChEBI" id="CHEBI:29105"/>
        <label>2</label>
    </ligand>
</feature>
<feature type="binding site" evidence="1">
    <location>
        <position position="276"/>
    </location>
    <ligand>
        <name>substrate</name>
    </ligand>
</feature>
<feature type="binding site" evidence="1">
    <location>
        <position position="303"/>
    </location>
    <ligand>
        <name>Zn(2+)</name>
        <dbReference type="ChEBI" id="CHEBI:29105"/>
        <label>1</label>
    </ligand>
</feature>
<feature type="binding site" evidence="1">
    <location>
        <position position="307"/>
    </location>
    <ligand>
        <name>substrate</name>
    </ligand>
</feature>
<feature type="binding site" evidence="1">
    <location>
        <begin position="321"/>
        <end position="322"/>
    </location>
    <ligand>
        <name>substrate</name>
    </ligand>
</feature>
<organism>
    <name type="scientific">Listeria monocytogenes serovar 1/2a (strain ATCC BAA-679 / EGD-e)</name>
    <dbReference type="NCBI Taxonomy" id="169963"/>
    <lineage>
        <taxon>Bacteria</taxon>
        <taxon>Bacillati</taxon>
        <taxon>Bacillota</taxon>
        <taxon>Bacilli</taxon>
        <taxon>Bacillales</taxon>
        <taxon>Listeriaceae</taxon>
        <taxon>Listeria</taxon>
    </lineage>
</organism>